<name>SECB_DICNV</name>
<dbReference type="EMBL" id="CP000513">
    <property type="protein sequence ID" value="ABQ14169.1"/>
    <property type="molecule type" value="Genomic_DNA"/>
</dbReference>
<dbReference type="RefSeq" id="WP_012030636.1">
    <property type="nucleotide sequence ID" value="NC_009446.1"/>
</dbReference>
<dbReference type="SMR" id="A5EW94"/>
<dbReference type="STRING" id="246195.DNO_0292"/>
<dbReference type="KEGG" id="dno:DNO_0292"/>
<dbReference type="eggNOG" id="COG1952">
    <property type="taxonomic scope" value="Bacteria"/>
</dbReference>
<dbReference type="HOGENOM" id="CLU_111574_1_0_6"/>
<dbReference type="OrthoDB" id="9795145at2"/>
<dbReference type="Proteomes" id="UP000000248">
    <property type="component" value="Chromosome"/>
</dbReference>
<dbReference type="GO" id="GO:0005737">
    <property type="term" value="C:cytoplasm"/>
    <property type="evidence" value="ECO:0007669"/>
    <property type="project" value="UniProtKB-SubCell"/>
</dbReference>
<dbReference type="GO" id="GO:0051082">
    <property type="term" value="F:unfolded protein binding"/>
    <property type="evidence" value="ECO:0007669"/>
    <property type="project" value="InterPro"/>
</dbReference>
<dbReference type="GO" id="GO:0006457">
    <property type="term" value="P:protein folding"/>
    <property type="evidence" value="ECO:0007669"/>
    <property type="project" value="UniProtKB-UniRule"/>
</dbReference>
<dbReference type="GO" id="GO:0051262">
    <property type="term" value="P:protein tetramerization"/>
    <property type="evidence" value="ECO:0007669"/>
    <property type="project" value="InterPro"/>
</dbReference>
<dbReference type="GO" id="GO:0015031">
    <property type="term" value="P:protein transport"/>
    <property type="evidence" value="ECO:0007669"/>
    <property type="project" value="UniProtKB-UniRule"/>
</dbReference>
<dbReference type="Gene3D" id="3.10.420.10">
    <property type="entry name" value="SecB-like"/>
    <property type="match status" value="1"/>
</dbReference>
<dbReference type="HAMAP" id="MF_00821">
    <property type="entry name" value="SecB"/>
    <property type="match status" value="1"/>
</dbReference>
<dbReference type="InterPro" id="IPR003708">
    <property type="entry name" value="SecB"/>
</dbReference>
<dbReference type="InterPro" id="IPR035958">
    <property type="entry name" value="SecB-like_sf"/>
</dbReference>
<dbReference type="NCBIfam" id="TIGR00809">
    <property type="entry name" value="secB"/>
    <property type="match status" value="1"/>
</dbReference>
<dbReference type="PANTHER" id="PTHR36918">
    <property type="match status" value="1"/>
</dbReference>
<dbReference type="PANTHER" id="PTHR36918:SF1">
    <property type="entry name" value="PROTEIN-EXPORT PROTEIN SECB"/>
    <property type="match status" value="1"/>
</dbReference>
<dbReference type="Pfam" id="PF02556">
    <property type="entry name" value="SecB"/>
    <property type="match status" value="1"/>
</dbReference>
<dbReference type="PRINTS" id="PR01594">
    <property type="entry name" value="SECBCHAPRONE"/>
</dbReference>
<dbReference type="SUPFAM" id="SSF54611">
    <property type="entry name" value="SecB-like"/>
    <property type="match status" value="1"/>
</dbReference>
<accession>A5EW94</accession>
<comment type="function">
    <text evidence="1">One of the proteins required for the normal export of preproteins out of the cell cytoplasm. It is a molecular chaperone that binds to a subset of precursor proteins, maintaining them in a translocation-competent state. It also specifically binds to its receptor SecA.</text>
</comment>
<comment type="subunit">
    <text evidence="1">Homotetramer, a dimer of dimers. One homotetramer interacts with 1 SecA dimer.</text>
</comment>
<comment type="subcellular location">
    <subcellularLocation>
        <location evidence="1">Cytoplasm</location>
    </subcellularLocation>
</comment>
<comment type="similarity">
    <text evidence="1">Belongs to the SecB family.</text>
</comment>
<gene>
    <name evidence="1" type="primary">secB</name>
    <name type="ordered locus">DNO_0292</name>
</gene>
<keyword id="KW-0143">Chaperone</keyword>
<keyword id="KW-0963">Cytoplasm</keyword>
<keyword id="KW-0653">Protein transport</keyword>
<keyword id="KW-1185">Reference proteome</keyword>
<keyword id="KW-0811">Translocation</keyword>
<keyword id="KW-0813">Transport</keyword>
<evidence type="ECO:0000255" key="1">
    <source>
        <dbReference type="HAMAP-Rule" id="MF_00821"/>
    </source>
</evidence>
<proteinExistence type="inferred from homology"/>
<reference key="1">
    <citation type="journal article" date="2007" name="Nat. Biotechnol.">
        <title>Genome sequence and identification of candidate vaccine antigens from the animal pathogen Dichelobacter nodosus.</title>
        <authorList>
            <person name="Myers G.S.A."/>
            <person name="Parker D."/>
            <person name="Al-Hasani K."/>
            <person name="Kennan R.M."/>
            <person name="Seemann T."/>
            <person name="Ren Q."/>
            <person name="Badger J.H."/>
            <person name="Selengut J.D."/>
            <person name="Deboy R.T."/>
            <person name="Tettelin H."/>
            <person name="Boyce J.D."/>
            <person name="McCarl V.P."/>
            <person name="Han X."/>
            <person name="Nelson W.C."/>
            <person name="Madupu R."/>
            <person name="Mohamoud Y."/>
            <person name="Holley T."/>
            <person name="Fedorova N."/>
            <person name="Khouri H."/>
            <person name="Bottomley S.P."/>
            <person name="Whittington R.J."/>
            <person name="Adler B."/>
            <person name="Songer J.G."/>
            <person name="Rood J.I."/>
            <person name="Paulsen I.T."/>
        </authorList>
    </citation>
    <scope>NUCLEOTIDE SEQUENCE [LARGE SCALE GENOMIC DNA]</scope>
    <source>
        <strain>VCS1703A</strain>
    </source>
</reference>
<organism>
    <name type="scientific">Dichelobacter nodosus (strain VCS1703A)</name>
    <dbReference type="NCBI Taxonomy" id="246195"/>
    <lineage>
        <taxon>Bacteria</taxon>
        <taxon>Pseudomonadati</taxon>
        <taxon>Pseudomonadota</taxon>
        <taxon>Gammaproteobacteria</taxon>
        <taxon>Cardiobacteriales</taxon>
        <taxon>Cardiobacteriaceae</taxon>
        <taxon>Dichelobacter</taxon>
    </lineage>
</organism>
<sequence>MAEEQQPRILLEVRKLYVGDLSVEVPNAPEVFQQSLNPEISLGINHENKKLKEENYYSVHLRLTVTAKDSTSSSVIYLVEATQTGIFEIVGLDESQLQHALNVYCTTVLYPYAREVISSAITHAGFPSLYLQPINFDALYQQQLQQEQNTTAQGGEA</sequence>
<feature type="chain" id="PRO_0000318221" description="Protein-export protein SecB">
    <location>
        <begin position="1"/>
        <end position="157"/>
    </location>
</feature>
<protein>
    <recommendedName>
        <fullName evidence="1">Protein-export protein SecB</fullName>
    </recommendedName>
</protein>